<sequence>MRYTILTKGDSKSNALKHKMMNYMKDFRMIEDSENPEIVISVGGDGTLLQAFHQYSHMLSKVAFVGVHTGHLGFYADWLPHEVEKLIIEINNSEFQVIEYPLLEIIMRYNDNGYETRYLALNEATMKTENGSTLVVDVNLRGKHFERFRGDGLCVSTPSGSTAYNKALGGALIHPSLEAMQITEIASINNRVFRTVGSPLVLPKHHTCLISPVNHDTIRMTIDHVSIKHKNVNSIQYRVANEKVRFARFRPFPFWKRVHDSFISSDEER</sequence>
<proteinExistence type="evidence at protein level"/>
<keyword id="KW-0067">ATP-binding</keyword>
<keyword id="KW-0963">Cytoplasm</keyword>
<keyword id="KW-0418">Kinase</keyword>
<keyword id="KW-0520">NAD</keyword>
<keyword id="KW-0521">NADP</keyword>
<keyword id="KW-0547">Nucleotide-binding</keyword>
<keyword id="KW-0808">Transferase</keyword>
<accession>P65777</accession>
<accession>Q99V84</accession>
<protein>
    <recommendedName>
        <fullName evidence="1">NAD kinase</fullName>
        <ecNumber evidence="1">2.7.1.23</ecNumber>
    </recommendedName>
    <alternativeName>
        <fullName evidence="1">ATP-dependent NAD kinase</fullName>
    </alternativeName>
</protein>
<gene>
    <name evidence="1" type="primary">nadK</name>
    <name type="ordered locus">SA0865</name>
</gene>
<name>NADK_STAAN</name>
<reference key="1">
    <citation type="journal article" date="2001" name="Lancet">
        <title>Whole genome sequencing of meticillin-resistant Staphylococcus aureus.</title>
        <authorList>
            <person name="Kuroda M."/>
            <person name="Ohta T."/>
            <person name="Uchiyama I."/>
            <person name="Baba T."/>
            <person name="Yuzawa H."/>
            <person name="Kobayashi I."/>
            <person name="Cui L."/>
            <person name="Oguchi A."/>
            <person name="Aoki K."/>
            <person name="Nagai Y."/>
            <person name="Lian J.-Q."/>
            <person name="Ito T."/>
            <person name="Kanamori M."/>
            <person name="Matsumaru H."/>
            <person name="Maruyama A."/>
            <person name="Murakami H."/>
            <person name="Hosoyama A."/>
            <person name="Mizutani-Ui Y."/>
            <person name="Takahashi N.K."/>
            <person name="Sawano T."/>
            <person name="Inoue R."/>
            <person name="Kaito C."/>
            <person name="Sekimizu K."/>
            <person name="Hirakawa H."/>
            <person name="Kuhara S."/>
            <person name="Goto S."/>
            <person name="Yabuzaki J."/>
            <person name="Kanehisa M."/>
            <person name="Yamashita A."/>
            <person name="Oshima K."/>
            <person name="Furuya K."/>
            <person name="Yoshino C."/>
            <person name="Shiba T."/>
            <person name="Hattori M."/>
            <person name="Ogasawara N."/>
            <person name="Hayashi H."/>
            <person name="Hiramatsu K."/>
        </authorList>
    </citation>
    <scope>NUCLEOTIDE SEQUENCE [LARGE SCALE GENOMIC DNA]</scope>
    <source>
        <strain>N315</strain>
    </source>
</reference>
<reference key="2">
    <citation type="submission" date="2007-10" db="UniProtKB">
        <title>Shotgun proteomic analysis of total and membrane protein extracts of S. aureus strain N315.</title>
        <authorList>
            <person name="Vaezzadeh A.R."/>
            <person name="Deshusses J."/>
            <person name="Lescuyer P."/>
            <person name="Hochstrasser D.F."/>
        </authorList>
    </citation>
    <scope>IDENTIFICATION BY MASS SPECTROMETRY [LARGE SCALE ANALYSIS]</scope>
    <source>
        <strain>N315</strain>
    </source>
</reference>
<feature type="chain" id="PRO_0000120660" description="NAD kinase">
    <location>
        <begin position="1"/>
        <end position="269"/>
    </location>
</feature>
<feature type="active site" description="Proton acceptor" evidence="1">
    <location>
        <position position="45"/>
    </location>
</feature>
<feature type="binding site" evidence="1">
    <location>
        <begin position="45"/>
        <end position="46"/>
    </location>
    <ligand>
        <name>NAD(+)</name>
        <dbReference type="ChEBI" id="CHEBI:57540"/>
    </ligand>
</feature>
<feature type="binding site" evidence="1">
    <location>
        <begin position="122"/>
        <end position="123"/>
    </location>
    <ligand>
        <name>NAD(+)</name>
        <dbReference type="ChEBI" id="CHEBI:57540"/>
    </ligand>
</feature>
<feature type="binding site" evidence="1">
    <location>
        <position position="149"/>
    </location>
    <ligand>
        <name>NAD(+)</name>
        <dbReference type="ChEBI" id="CHEBI:57540"/>
    </ligand>
</feature>
<feature type="binding site" evidence="1">
    <location>
        <position position="151"/>
    </location>
    <ligand>
        <name>NAD(+)</name>
        <dbReference type="ChEBI" id="CHEBI:57540"/>
    </ligand>
</feature>
<feature type="binding site" evidence="1">
    <location>
        <position position="186"/>
    </location>
    <ligand>
        <name>NAD(+)</name>
        <dbReference type="ChEBI" id="CHEBI:57540"/>
    </ligand>
</feature>
<comment type="function">
    <text evidence="1">Involved in the regulation of the intracellular balance of NAD and NADP, and is a key enzyme in the biosynthesis of NADP. Catalyzes specifically the phosphorylation on 2'-hydroxyl of the adenosine moiety of NAD to yield NADP.</text>
</comment>
<comment type="catalytic activity">
    <reaction evidence="1">
        <text>NAD(+) + ATP = ADP + NADP(+) + H(+)</text>
        <dbReference type="Rhea" id="RHEA:18629"/>
        <dbReference type="ChEBI" id="CHEBI:15378"/>
        <dbReference type="ChEBI" id="CHEBI:30616"/>
        <dbReference type="ChEBI" id="CHEBI:57540"/>
        <dbReference type="ChEBI" id="CHEBI:58349"/>
        <dbReference type="ChEBI" id="CHEBI:456216"/>
        <dbReference type="EC" id="2.7.1.23"/>
    </reaction>
</comment>
<comment type="cofactor">
    <cofactor evidence="1">
        <name>a divalent metal cation</name>
        <dbReference type="ChEBI" id="CHEBI:60240"/>
    </cofactor>
</comment>
<comment type="subcellular location">
    <subcellularLocation>
        <location evidence="1">Cytoplasm</location>
    </subcellularLocation>
</comment>
<comment type="similarity">
    <text evidence="1">Belongs to the NAD kinase family.</text>
</comment>
<dbReference type="EC" id="2.7.1.23" evidence="1"/>
<dbReference type="EMBL" id="BA000018">
    <property type="protein sequence ID" value="BAB42106.1"/>
    <property type="molecule type" value="Genomic_DNA"/>
</dbReference>
<dbReference type="PIR" id="G89868">
    <property type="entry name" value="G89868"/>
</dbReference>
<dbReference type="RefSeq" id="WP_001270834.1">
    <property type="nucleotide sequence ID" value="NC_002745.2"/>
</dbReference>
<dbReference type="SMR" id="P65777"/>
<dbReference type="EnsemblBacteria" id="BAB42106">
    <property type="protein sequence ID" value="BAB42106"/>
    <property type="gene ID" value="BAB42106"/>
</dbReference>
<dbReference type="KEGG" id="sau:SA0865"/>
<dbReference type="HOGENOM" id="CLU_008831_0_3_9"/>
<dbReference type="GO" id="GO:0005737">
    <property type="term" value="C:cytoplasm"/>
    <property type="evidence" value="ECO:0007669"/>
    <property type="project" value="UniProtKB-SubCell"/>
</dbReference>
<dbReference type="GO" id="GO:0005524">
    <property type="term" value="F:ATP binding"/>
    <property type="evidence" value="ECO:0007669"/>
    <property type="project" value="UniProtKB-KW"/>
</dbReference>
<dbReference type="GO" id="GO:0046872">
    <property type="term" value="F:metal ion binding"/>
    <property type="evidence" value="ECO:0007669"/>
    <property type="project" value="UniProtKB-UniRule"/>
</dbReference>
<dbReference type="GO" id="GO:0051287">
    <property type="term" value="F:NAD binding"/>
    <property type="evidence" value="ECO:0007669"/>
    <property type="project" value="UniProtKB-ARBA"/>
</dbReference>
<dbReference type="GO" id="GO:0003951">
    <property type="term" value="F:NAD+ kinase activity"/>
    <property type="evidence" value="ECO:0007669"/>
    <property type="project" value="UniProtKB-UniRule"/>
</dbReference>
<dbReference type="GO" id="GO:0019674">
    <property type="term" value="P:NAD metabolic process"/>
    <property type="evidence" value="ECO:0007669"/>
    <property type="project" value="InterPro"/>
</dbReference>
<dbReference type="GO" id="GO:0006741">
    <property type="term" value="P:NADP biosynthetic process"/>
    <property type="evidence" value="ECO:0007669"/>
    <property type="project" value="UniProtKB-UniRule"/>
</dbReference>
<dbReference type="FunFam" id="2.60.200.30:FF:000002">
    <property type="entry name" value="NAD kinase"/>
    <property type="match status" value="1"/>
</dbReference>
<dbReference type="Gene3D" id="3.40.50.10330">
    <property type="entry name" value="Probable inorganic polyphosphate/atp-NAD kinase, domain 1"/>
    <property type="match status" value="1"/>
</dbReference>
<dbReference type="Gene3D" id="2.60.200.30">
    <property type="entry name" value="Probable inorganic polyphosphate/atp-NAD kinase, domain 2"/>
    <property type="match status" value="1"/>
</dbReference>
<dbReference type="HAMAP" id="MF_00361">
    <property type="entry name" value="NAD_kinase"/>
    <property type="match status" value="1"/>
</dbReference>
<dbReference type="InterPro" id="IPR017438">
    <property type="entry name" value="ATP-NAD_kinase_N"/>
</dbReference>
<dbReference type="InterPro" id="IPR017437">
    <property type="entry name" value="ATP-NAD_kinase_PpnK-typ_C"/>
</dbReference>
<dbReference type="InterPro" id="IPR016064">
    <property type="entry name" value="NAD/diacylglycerol_kinase_sf"/>
</dbReference>
<dbReference type="InterPro" id="IPR002504">
    <property type="entry name" value="NADK"/>
</dbReference>
<dbReference type="NCBIfam" id="NF003424">
    <property type="entry name" value="PRK04885.1"/>
    <property type="match status" value="1"/>
</dbReference>
<dbReference type="PANTHER" id="PTHR20275">
    <property type="entry name" value="NAD KINASE"/>
    <property type="match status" value="1"/>
</dbReference>
<dbReference type="PANTHER" id="PTHR20275:SF0">
    <property type="entry name" value="NAD KINASE"/>
    <property type="match status" value="1"/>
</dbReference>
<dbReference type="Pfam" id="PF01513">
    <property type="entry name" value="NAD_kinase"/>
    <property type="match status" value="1"/>
</dbReference>
<dbReference type="Pfam" id="PF20143">
    <property type="entry name" value="NAD_kinase_C"/>
    <property type="match status" value="1"/>
</dbReference>
<dbReference type="SUPFAM" id="SSF111331">
    <property type="entry name" value="NAD kinase/diacylglycerol kinase-like"/>
    <property type="match status" value="1"/>
</dbReference>
<organism>
    <name type="scientific">Staphylococcus aureus (strain N315)</name>
    <dbReference type="NCBI Taxonomy" id="158879"/>
    <lineage>
        <taxon>Bacteria</taxon>
        <taxon>Bacillati</taxon>
        <taxon>Bacillota</taxon>
        <taxon>Bacilli</taxon>
        <taxon>Bacillales</taxon>
        <taxon>Staphylococcaceae</taxon>
        <taxon>Staphylococcus</taxon>
    </lineage>
</organism>
<evidence type="ECO:0000255" key="1">
    <source>
        <dbReference type="HAMAP-Rule" id="MF_00361"/>
    </source>
</evidence>